<proteinExistence type="inferred from homology"/>
<protein>
    <recommendedName>
        <fullName evidence="1">Large ribosomal subunit protein uL6</fullName>
    </recommendedName>
    <alternativeName>
        <fullName evidence="2">50S ribosomal protein L6</fullName>
    </alternativeName>
</protein>
<name>RL6_LISW6</name>
<sequence length="178" mass="19400">MSRIGKKTIVIPAGVTVTLNGSTATVKGPKGELVKEFNPEITINIEGNEINVSRPTDNKNHRALHGTTRAILNNMVVGVSEGYEKKLELIGVGYRAQKQGDKLVLNVGYSHPVEFVAPKGVEIEVPANTQVIVKGYNKEHVGELAANIRAVRPPEPYKGKGIRYEGEHVRRKEGKTGK</sequence>
<comment type="function">
    <text evidence="1">This protein binds to the 23S rRNA, and is important in its secondary structure. It is located near the subunit interface in the base of the L7/L12 stalk, and near the tRNA binding site of the peptidyltransferase center.</text>
</comment>
<comment type="subunit">
    <text evidence="1">Part of the 50S ribosomal subunit.</text>
</comment>
<comment type="similarity">
    <text evidence="1">Belongs to the universal ribosomal protein uL6 family.</text>
</comment>
<keyword id="KW-0687">Ribonucleoprotein</keyword>
<keyword id="KW-0689">Ribosomal protein</keyword>
<keyword id="KW-0694">RNA-binding</keyword>
<keyword id="KW-0699">rRNA-binding</keyword>
<dbReference type="EMBL" id="AM263198">
    <property type="protein sequence ID" value="CAK21985.1"/>
    <property type="molecule type" value="Genomic_DNA"/>
</dbReference>
<dbReference type="RefSeq" id="WP_003749693.1">
    <property type="nucleotide sequence ID" value="NC_008555.1"/>
</dbReference>
<dbReference type="SMR" id="A0ALV3"/>
<dbReference type="STRING" id="386043.lwe2567"/>
<dbReference type="GeneID" id="93236039"/>
<dbReference type="KEGG" id="lwe:lwe2567"/>
<dbReference type="eggNOG" id="COG0097">
    <property type="taxonomic scope" value="Bacteria"/>
</dbReference>
<dbReference type="HOGENOM" id="CLU_065464_1_2_9"/>
<dbReference type="OrthoDB" id="9805007at2"/>
<dbReference type="Proteomes" id="UP000000779">
    <property type="component" value="Chromosome"/>
</dbReference>
<dbReference type="GO" id="GO:0022625">
    <property type="term" value="C:cytosolic large ribosomal subunit"/>
    <property type="evidence" value="ECO:0007669"/>
    <property type="project" value="TreeGrafter"/>
</dbReference>
<dbReference type="GO" id="GO:0019843">
    <property type="term" value="F:rRNA binding"/>
    <property type="evidence" value="ECO:0007669"/>
    <property type="project" value="UniProtKB-UniRule"/>
</dbReference>
<dbReference type="GO" id="GO:0003735">
    <property type="term" value="F:structural constituent of ribosome"/>
    <property type="evidence" value="ECO:0007669"/>
    <property type="project" value="InterPro"/>
</dbReference>
<dbReference type="GO" id="GO:0002181">
    <property type="term" value="P:cytoplasmic translation"/>
    <property type="evidence" value="ECO:0007669"/>
    <property type="project" value="TreeGrafter"/>
</dbReference>
<dbReference type="FunFam" id="3.90.930.12:FF:000001">
    <property type="entry name" value="50S ribosomal protein L6"/>
    <property type="match status" value="1"/>
</dbReference>
<dbReference type="FunFam" id="3.90.930.12:FF:000002">
    <property type="entry name" value="50S ribosomal protein L6"/>
    <property type="match status" value="1"/>
</dbReference>
<dbReference type="Gene3D" id="3.90.930.12">
    <property type="entry name" value="Ribosomal protein L6, alpha-beta domain"/>
    <property type="match status" value="2"/>
</dbReference>
<dbReference type="HAMAP" id="MF_01365_B">
    <property type="entry name" value="Ribosomal_uL6_B"/>
    <property type="match status" value="1"/>
</dbReference>
<dbReference type="InterPro" id="IPR000702">
    <property type="entry name" value="Ribosomal_uL6-like"/>
</dbReference>
<dbReference type="InterPro" id="IPR036789">
    <property type="entry name" value="Ribosomal_uL6-like_a/b-dom_sf"/>
</dbReference>
<dbReference type="InterPro" id="IPR020040">
    <property type="entry name" value="Ribosomal_uL6_a/b-dom"/>
</dbReference>
<dbReference type="InterPro" id="IPR019906">
    <property type="entry name" value="Ribosomal_uL6_bac-type"/>
</dbReference>
<dbReference type="InterPro" id="IPR002358">
    <property type="entry name" value="Ribosomal_uL6_CS"/>
</dbReference>
<dbReference type="NCBIfam" id="TIGR03654">
    <property type="entry name" value="L6_bact"/>
    <property type="match status" value="1"/>
</dbReference>
<dbReference type="PANTHER" id="PTHR11655">
    <property type="entry name" value="60S/50S RIBOSOMAL PROTEIN L6/L9"/>
    <property type="match status" value="1"/>
</dbReference>
<dbReference type="PANTHER" id="PTHR11655:SF14">
    <property type="entry name" value="LARGE RIBOSOMAL SUBUNIT PROTEIN UL6M"/>
    <property type="match status" value="1"/>
</dbReference>
<dbReference type="Pfam" id="PF00347">
    <property type="entry name" value="Ribosomal_L6"/>
    <property type="match status" value="2"/>
</dbReference>
<dbReference type="PIRSF" id="PIRSF002162">
    <property type="entry name" value="Ribosomal_L6"/>
    <property type="match status" value="1"/>
</dbReference>
<dbReference type="PRINTS" id="PR00059">
    <property type="entry name" value="RIBOSOMALL6"/>
</dbReference>
<dbReference type="SUPFAM" id="SSF56053">
    <property type="entry name" value="Ribosomal protein L6"/>
    <property type="match status" value="2"/>
</dbReference>
<dbReference type="PROSITE" id="PS00525">
    <property type="entry name" value="RIBOSOMAL_L6_1"/>
    <property type="match status" value="1"/>
</dbReference>
<feature type="chain" id="PRO_1000055254" description="Large ribosomal subunit protein uL6">
    <location>
        <begin position="1"/>
        <end position="178"/>
    </location>
</feature>
<evidence type="ECO:0000255" key="1">
    <source>
        <dbReference type="HAMAP-Rule" id="MF_01365"/>
    </source>
</evidence>
<evidence type="ECO:0000305" key="2"/>
<accession>A0ALV3</accession>
<reference key="1">
    <citation type="journal article" date="2006" name="J. Bacteriol.">
        <title>Whole-genome sequence of Listeria welshimeri reveals common steps in genome reduction with Listeria innocua as compared to Listeria monocytogenes.</title>
        <authorList>
            <person name="Hain T."/>
            <person name="Steinweg C."/>
            <person name="Kuenne C.T."/>
            <person name="Billion A."/>
            <person name="Ghai R."/>
            <person name="Chatterjee S.S."/>
            <person name="Domann E."/>
            <person name="Kaerst U."/>
            <person name="Goesmann A."/>
            <person name="Bekel T."/>
            <person name="Bartels D."/>
            <person name="Kaiser O."/>
            <person name="Meyer F."/>
            <person name="Puehler A."/>
            <person name="Weisshaar B."/>
            <person name="Wehland J."/>
            <person name="Liang C."/>
            <person name="Dandekar T."/>
            <person name="Lampidis R."/>
            <person name="Kreft J."/>
            <person name="Goebel W."/>
            <person name="Chakraborty T."/>
        </authorList>
    </citation>
    <scope>NUCLEOTIDE SEQUENCE [LARGE SCALE GENOMIC DNA]</scope>
    <source>
        <strain>ATCC 35897 / DSM 20650 / CCUG 15529 / CIP 8149 / NCTC 11857 / SLCC 5334 / V8</strain>
    </source>
</reference>
<gene>
    <name evidence="1" type="primary">rplF</name>
    <name type="ordered locus">lwe2567</name>
</gene>
<organism>
    <name type="scientific">Listeria welshimeri serovar 6b (strain ATCC 35897 / DSM 20650 / CCUG 15529 / CIP 8149 / NCTC 11857 / SLCC 5334 / V8)</name>
    <dbReference type="NCBI Taxonomy" id="386043"/>
    <lineage>
        <taxon>Bacteria</taxon>
        <taxon>Bacillati</taxon>
        <taxon>Bacillota</taxon>
        <taxon>Bacilli</taxon>
        <taxon>Bacillales</taxon>
        <taxon>Listeriaceae</taxon>
        <taxon>Listeria</taxon>
    </lineage>
</organism>